<organism>
    <name type="scientific">Gossypium barbadense</name>
    <name type="common">Sea Island cotton</name>
    <name type="synonym">Hibiscus barbadensis</name>
    <dbReference type="NCBI Taxonomy" id="3634"/>
    <lineage>
        <taxon>Eukaryota</taxon>
        <taxon>Viridiplantae</taxon>
        <taxon>Streptophyta</taxon>
        <taxon>Embryophyta</taxon>
        <taxon>Tracheophyta</taxon>
        <taxon>Spermatophyta</taxon>
        <taxon>Magnoliopsida</taxon>
        <taxon>eudicotyledons</taxon>
        <taxon>Gunneridae</taxon>
        <taxon>Pentapetalae</taxon>
        <taxon>rosids</taxon>
        <taxon>malvids</taxon>
        <taxon>Malvales</taxon>
        <taxon>Malvaceae</taxon>
        <taxon>Malvoideae</taxon>
        <taxon>Gossypium</taxon>
    </lineage>
</organism>
<geneLocation type="chloroplast"/>
<keyword id="KW-0004">4Fe-4S</keyword>
<keyword id="KW-0150">Chloroplast</keyword>
<keyword id="KW-0249">Electron transport</keyword>
<keyword id="KW-0408">Iron</keyword>
<keyword id="KW-0411">Iron-sulfur</keyword>
<keyword id="KW-0472">Membrane</keyword>
<keyword id="KW-0479">Metal-binding</keyword>
<keyword id="KW-0560">Oxidoreductase</keyword>
<keyword id="KW-0602">Photosynthesis</keyword>
<keyword id="KW-0603">Photosystem I</keyword>
<keyword id="KW-0934">Plastid</keyword>
<keyword id="KW-0677">Repeat</keyword>
<keyword id="KW-0793">Thylakoid</keyword>
<keyword id="KW-0813">Transport</keyword>
<protein>
    <recommendedName>
        <fullName evidence="2">Photosystem I iron-sulfur center</fullName>
        <ecNumber evidence="2">1.97.1.12</ecNumber>
    </recommendedName>
    <alternativeName>
        <fullName evidence="2">9 kDa polypeptide</fullName>
    </alternativeName>
    <alternativeName>
        <fullName evidence="2">PSI-C</fullName>
    </alternativeName>
    <alternativeName>
        <fullName evidence="2">Photosystem I subunit VII</fullName>
    </alternativeName>
    <alternativeName>
        <fullName evidence="2">PsaC</fullName>
    </alternativeName>
</protein>
<feature type="initiator methionine" description="Removed" evidence="1">
    <location>
        <position position="1"/>
    </location>
</feature>
<feature type="chain" id="PRO_0000275982" description="Photosystem I iron-sulfur center">
    <location>
        <begin position="2"/>
        <end position="81"/>
    </location>
</feature>
<feature type="domain" description="4Fe-4S ferredoxin-type 1" evidence="2">
    <location>
        <begin position="2"/>
        <end position="31"/>
    </location>
</feature>
<feature type="domain" description="4Fe-4S ferredoxin-type 2" evidence="2">
    <location>
        <begin position="39"/>
        <end position="68"/>
    </location>
</feature>
<feature type="binding site" evidence="2">
    <location>
        <position position="11"/>
    </location>
    <ligand>
        <name>[4Fe-4S] cluster</name>
        <dbReference type="ChEBI" id="CHEBI:49883"/>
        <label>1</label>
    </ligand>
</feature>
<feature type="binding site" evidence="2">
    <location>
        <position position="14"/>
    </location>
    <ligand>
        <name>[4Fe-4S] cluster</name>
        <dbReference type="ChEBI" id="CHEBI:49883"/>
        <label>1</label>
    </ligand>
</feature>
<feature type="binding site" evidence="2">
    <location>
        <position position="17"/>
    </location>
    <ligand>
        <name>[4Fe-4S] cluster</name>
        <dbReference type="ChEBI" id="CHEBI:49883"/>
        <label>1</label>
    </ligand>
</feature>
<feature type="binding site" evidence="2">
    <location>
        <position position="21"/>
    </location>
    <ligand>
        <name>[4Fe-4S] cluster</name>
        <dbReference type="ChEBI" id="CHEBI:49883"/>
        <label>2</label>
    </ligand>
</feature>
<feature type="binding site" evidence="2">
    <location>
        <position position="48"/>
    </location>
    <ligand>
        <name>[4Fe-4S] cluster</name>
        <dbReference type="ChEBI" id="CHEBI:49883"/>
        <label>2</label>
    </ligand>
</feature>
<feature type="binding site" evidence="2">
    <location>
        <position position="51"/>
    </location>
    <ligand>
        <name>[4Fe-4S] cluster</name>
        <dbReference type="ChEBI" id="CHEBI:49883"/>
        <label>2</label>
    </ligand>
</feature>
<feature type="binding site" evidence="2">
    <location>
        <position position="54"/>
    </location>
    <ligand>
        <name>[4Fe-4S] cluster</name>
        <dbReference type="ChEBI" id="CHEBI:49883"/>
        <label>2</label>
    </ligand>
</feature>
<feature type="binding site" evidence="2">
    <location>
        <position position="58"/>
    </location>
    <ligand>
        <name>[4Fe-4S] cluster</name>
        <dbReference type="ChEBI" id="CHEBI:49883"/>
        <label>1</label>
    </ligand>
</feature>
<reference key="1">
    <citation type="journal article" date="2006" name="Genes Genet. Syst.">
        <title>Complete nucleotide sequence of the cotton (Gossypium barbadense L.) chloroplast genome with a comparative analysis of sequences among 9 dicot plants.</title>
        <authorList>
            <person name="Ibrahim R.I.H."/>
            <person name="Azuma J."/>
            <person name="Sakamoto M."/>
        </authorList>
    </citation>
    <scope>NUCLEOTIDE SEQUENCE [LARGE SCALE GENOMIC DNA]</scope>
</reference>
<gene>
    <name evidence="2" type="primary">psaC</name>
</gene>
<name>PSAC_GOSBA</name>
<evidence type="ECO:0000250" key="1"/>
<evidence type="ECO:0000255" key="2">
    <source>
        <dbReference type="HAMAP-Rule" id="MF_01303"/>
    </source>
</evidence>
<proteinExistence type="inferred from homology"/>
<sequence>MSHSVKIYDTCIGCTQCVRACPTDVLEMIPWDGCKAKQIASAPRTEDCVGCKRCESACPTDFLSVRVYLWHETTRSMGLAY</sequence>
<accession>A0ZZ86</accession>
<comment type="function">
    <text evidence="2">Apoprotein for the two 4Fe-4S centers FA and FB of photosystem I (PSI); essential for photochemical activity. FB is the terminal electron acceptor of PSI, donating electrons to ferredoxin. The C-terminus interacts with PsaA/B/D and helps assemble the protein into the PSI complex. Required for binding of PsaD and PsaE to PSI. PSI is a plastocyanin-ferredoxin oxidoreductase, converting photonic excitation into a charge separation, which transfers an electron from the donor P700 chlorophyll pair to the spectroscopically characterized acceptors A0, A1, FX, FA and FB in turn.</text>
</comment>
<comment type="catalytic activity">
    <reaction evidence="2">
        <text>reduced [plastocyanin] + hnu + oxidized [2Fe-2S]-[ferredoxin] = oxidized [plastocyanin] + reduced [2Fe-2S]-[ferredoxin]</text>
        <dbReference type="Rhea" id="RHEA:30407"/>
        <dbReference type="Rhea" id="RHEA-COMP:10000"/>
        <dbReference type="Rhea" id="RHEA-COMP:10001"/>
        <dbReference type="Rhea" id="RHEA-COMP:10039"/>
        <dbReference type="Rhea" id="RHEA-COMP:10040"/>
        <dbReference type="ChEBI" id="CHEBI:29036"/>
        <dbReference type="ChEBI" id="CHEBI:30212"/>
        <dbReference type="ChEBI" id="CHEBI:33737"/>
        <dbReference type="ChEBI" id="CHEBI:33738"/>
        <dbReference type="ChEBI" id="CHEBI:49552"/>
        <dbReference type="EC" id="1.97.1.12"/>
    </reaction>
</comment>
<comment type="cofactor">
    <cofactor evidence="2">
        <name>[4Fe-4S] cluster</name>
        <dbReference type="ChEBI" id="CHEBI:49883"/>
    </cofactor>
    <text evidence="2">Binds 2 [4Fe-4S] clusters. Cluster 2 is most probably the spectroscopically characterized electron acceptor FA and cluster 1 is most probably FB.</text>
</comment>
<comment type="subunit">
    <text evidence="2">The eukaryotic PSI reaction center is composed of at least 11 subunits.</text>
</comment>
<comment type="subcellular location">
    <subcellularLocation>
        <location evidence="2">Plastid</location>
        <location evidence="2">Chloroplast thylakoid membrane</location>
        <topology evidence="2">Peripheral membrane protein</topology>
        <orientation evidence="2">Stromal side</orientation>
    </subcellularLocation>
</comment>
<dbReference type="EC" id="1.97.1.12" evidence="2"/>
<dbReference type="EMBL" id="AP009123">
    <property type="protein sequence ID" value="BAF41298.1"/>
    <property type="molecule type" value="Genomic_DNA"/>
</dbReference>
<dbReference type="RefSeq" id="YP_913237.1">
    <property type="nucleotide sequence ID" value="NC_008641.1"/>
</dbReference>
<dbReference type="SMR" id="A0ZZ86"/>
<dbReference type="GeneID" id="4575213"/>
<dbReference type="OrthoDB" id="9at2759"/>
<dbReference type="GO" id="GO:0009535">
    <property type="term" value="C:chloroplast thylakoid membrane"/>
    <property type="evidence" value="ECO:0007669"/>
    <property type="project" value="UniProtKB-SubCell"/>
</dbReference>
<dbReference type="GO" id="GO:0009522">
    <property type="term" value="C:photosystem I"/>
    <property type="evidence" value="ECO:0007669"/>
    <property type="project" value="UniProtKB-KW"/>
</dbReference>
<dbReference type="GO" id="GO:0051539">
    <property type="term" value="F:4 iron, 4 sulfur cluster binding"/>
    <property type="evidence" value="ECO:0007669"/>
    <property type="project" value="UniProtKB-KW"/>
</dbReference>
<dbReference type="GO" id="GO:0009055">
    <property type="term" value="F:electron transfer activity"/>
    <property type="evidence" value="ECO:0007669"/>
    <property type="project" value="UniProtKB-UniRule"/>
</dbReference>
<dbReference type="GO" id="GO:0046872">
    <property type="term" value="F:metal ion binding"/>
    <property type="evidence" value="ECO:0007669"/>
    <property type="project" value="UniProtKB-KW"/>
</dbReference>
<dbReference type="GO" id="GO:0016491">
    <property type="term" value="F:oxidoreductase activity"/>
    <property type="evidence" value="ECO:0007669"/>
    <property type="project" value="UniProtKB-KW"/>
</dbReference>
<dbReference type="GO" id="GO:0009773">
    <property type="term" value="P:photosynthetic electron transport in photosystem I"/>
    <property type="evidence" value="ECO:0007669"/>
    <property type="project" value="InterPro"/>
</dbReference>
<dbReference type="FunFam" id="3.30.70.20:FF:000001">
    <property type="entry name" value="Photosystem I iron-sulfur center"/>
    <property type="match status" value="1"/>
</dbReference>
<dbReference type="Gene3D" id="3.30.70.20">
    <property type="match status" value="1"/>
</dbReference>
<dbReference type="HAMAP" id="MF_01303">
    <property type="entry name" value="PSI_PsaC"/>
    <property type="match status" value="1"/>
</dbReference>
<dbReference type="InterPro" id="IPR017896">
    <property type="entry name" value="4Fe4S_Fe-S-bd"/>
</dbReference>
<dbReference type="InterPro" id="IPR017900">
    <property type="entry name" value="4Fe4S_Fe_S_CS"/>
</dbReference>
<dbReference type="InterPro" id="IPR050157">
    <property type="entry name" value="PSI_iron-sulfur_center"/>
</dbReference>
<dbReference type="InterPro" id="IPR017491">
    <property type="entry name" value="PSI_PsaC"/>
</dbReference>
<dbReference type="NCBIfam" id="TIGR03048">
    <property type="entry name" value="PS_I_psaC"/>
    <property type="match status" value="1"/>
</dbReference>
<dbReference type="PANTHER" id="PTHR24960:SF79">
    <property type="entry name" value="PHOTOSYSTEM I IRON-SULFUR CENTER"/>
    <property type="match status" value="1"/>
</dbReference>
<dbReference type="PANTHER" id="PTHR24960">
    <property type="entry name" value="PHOTOSYSTEM I IRON-SULFUR CENTER-RELATED"/>
    <property type="match status" value="1"/>
</dbReference>
<dbReference type="Pfam" id="PF14697">
    <property type="entry name" value="Fer4_21"/>
    <property type="match status" value="1"/>
</dbReference>
<dbReference type="SUPFAM" id="SSF54862">
    <property type="entry name" value="4Fe-4S ferredoxins"/>
    <property type="match status" value="1"/>
</dbReference>
<dbReference type="PROSITE" id="PS00198">
    <property type="entry name" value="4FE4S_FER_1"/>
    <property type="match status" value="2"/>
</dbReference>
<dbReference type="PROSITE" id="PS51379">
    <property type="entry name" value="4FE4S_FER_2"/>
    <property type="match status" value="2"/>
</dbReference>